<dbReference type="EC" id="1.2.1.27"/>
<dbReference type="EMBL" id="AC007197">
    <property type="protein sequence ID" value="AAD25855.1"/>
    <property type="molecule type" value="Genomic_DNA"/>
</dbReference>
<dbReference type="EMBL" id="CP002685">
    <property type="protein sequence ID" value="AEC06286.1"/>
    <property type="molecule type" value="Genomic_DNA"/>
</dbReference>
<dbReference type="EMBL" id="AK230004">
    <property type="protein sequence ID" value="BAF01828.1"/>
    <property type="molecule type" value="mRNA"/>
</dbReference>
<dbReference type="PIR" id="H84514">
    <property type="entry name" value="H84514"/>
</dbReference>
<dbReference type="RefSeq" id="NP_179032.1">
    <molecule id="Q0WM29-1"/>
    <property type="nucleotide sequence ID" value="NM_126989.2"/>
</dbReference>
<dbReference type="SMR" id="Q0WM29"/>
<dbReference type="BioGRID" id="1263">
    <property type="interactions" value="3"/>
</dbReference>
<dbReference type="FunCoup" id="Q0WM29">
    <property type="interactions" value="2711"/>
</dbReference>
<dbReference type="STRING" id="3702.Q0WM29"/>
<dbReference type="GlyGen" id="Q0WM29">
    <property type="glycosylation" value="1 site"/>
</dbReference>
<dbReference type="MetOSite" id="Q0WM29"/>
<dbReference type="PaxDb" id="3702-AT2G14170.1"/>
<dbReference type="ProteomicsDB" id="237159">
    <molecule id="Q0WM29-1"/>
</dbReference>
<dbReference type="EnsemblPlants" id="AT2G14170.1">
    <molecule id="Q0WM29-1"/>
    <property type="protein sequence ID" value="AT2G14170.1"/>
    <property type="gene ID" value="AT2G14170"/>
</dbReference>
<dbReference type="GeneID" id="815903"/>
<dbReference type="Gramene" id="AT2G14170.1">
    <molecule id="Q0WM29-1"/>
    <property type="protein sequence ID" value="AT2G14170.1"/>
    <property type="gene ID" value="AT2G14170"/>
</dbReference>
<dbReference type="KEGG" id="ath:AT2G14170"/>
<dbReference type="Araport" id="AT2G14170"/>
<dbReference type="TAIR" id="AT2G14170">
    <property type="gene designation" value="ALDH6B2"/>
</dbReference>
<dbReference type="eggNOG" id="KOG2449">
    <property type="taxonomic scope" value="Eukaryota"/>
</dbReference>
<dbReference type="InParanoid" id="Q0WM29"/>
<dbReference type="PhylomeDB" id="Q0WM29"/>
<dbReference type="BioCyc" id="ARA:AT2G14170-MONOMER"/>
<dbReference type="CD-CODE" id="4299E36E">
    <property type="entry name" value="Nucleolus"/>
</dbReference>
<dbReference type="PRO" id="PR:Q0WM29"/>
<dbReference type="Proteomes" id="UP000006548">
    <property type="component" value="Chromosome 2"/>
</dbReference>
<dbReference type="ExpressionAtlas" id="Q0WM29">
    <property type="expression patterns" value="baseline and differential"/>
</dbReference>
<dbReference type="GO" id="GO:0005829">
    <property type="term" value="C:cytosol"/>
    <property type="evidence" value="ECO:0007005"/>
    <property type="project" value="TAIR"/>
</dbReference>
<dbReference type="GO" id="GO:0005739">
    <property type="term" value="C:mitochondrion"/>
    <property type="evidence" value="ECO:0000314"/>
    <property type="project" value="TAIR"/>
</dbReference>
<dbReference type="GO" id="GO:0005507">
    <property type="term" value="F:copper ion binding"/>
    <property type="evidence" value="ECO:0007005"/>
    <property type="project" value="TAIR"/>
</dbReference>
<dbReference type="GO" id="GO:0004491">
    <property type="term" value="F:methylmalonate-semialdehyde dehydrogenase (acylating, NAD) activity"/>
    <property type="evidence" value="ECO:0007669"/>
    <property type="project" value="UniProtKB-EC"/>
</dbReference>
<dbReference type="CDD" id="cd07085">
    <property type="entry name" value="ALDH_F6_MMSDH"/>
    <property type="match status" value="1"/>
</dbReference>
<dbReference type="FunFam" id="3.40.309.10:FF:000002">
    <property type="entry name" value="Methylmalonate-semialdehyde dehydrogenase (Acylating)"/>
    <property type="match status" value="1"/>
</dbReference>
<dbReference type="FunFam" id="3.40.605.10:FF:000003">
    <property type="entry name" value="Methylmalonate-semialdehyde dehydrogenase [acylating]"/>
    <property type="match status" value="1"/>
</dbReference>
<dbReference type="Gene3D" id="3.40.605.10">
    <property type="entry name" value="Aldehyde Dehydrogenase, Chain A, domain 1"/>
    <property type="match status" value="1"/>
</dbReference>
<dbReference type="Gene3D" id="3.40.309.10">
    <property type="entry name" value="Aldehyde Dehydrogenase, Chain A, domain 2"/>
    <property type="match status" value="1"/>
</dbReference>
<dbReference type="InterPro" id="IPR016161">
    <property type="entry name" value="Ald_DH/histidinol_DH"/>
</dbReference>
<dbReference type="InterPro" id="IPR016163">
    <property type="entry name" value="Ald_DH_C"/>
</dbReference>
<dbReference type="InterPro" id="IPR016160">
    <property type="entry name" value="Ald_DH_CS_CYS"/>
</dbReference>
<dbReference type="InterPro" id="IPR016162">
    <property type="entry name" value="Ald_DH_N"/>
</dbReference>
<dbReference type="InterPro" id="IPR015590">
    <property type="entry name" value="Aldehyde_DH_dom"/>
</dbReference>
<dbReference type="InterPro" id="IPR010061">
    <property type="entry name" value="MeMal-semiAld_DH"/>
</dbReference>
<dbReference type="NCBIfam" id="TIGR01722">
    <property type="entry name" value="MMSDH"/>
    <property type="match status" value="1"/>
</dbReference>
<dbReference type="PANTHER" id="PTHR43866">
    <property type="entry name" value="MALONATE-SEMIALDEHYDE DEHYDROGENASE"/>
    <property type="match status" value="1"/>
</dbReference>
<dbReference type="PANTHER" id="PTHR43866:SF3">
    <property type="entry name" value="METHYLMALONATE-SEMIALDEHYDE DEHYDROGENASE [ACYLATING], MITOCHONDRIAL"/>
    <property type="match status" value="1"/>
</dbReference>
<dbReference type="Pfam" id="PF00171">
    <property type="entry name" value="Aldedh"/>
    <property type="match status" value="1"/>
</dbReference>
<dbReference type="SUPFAM" id="SSF53720">
    <property type="entry name" value="ALDH-like"/>
    <property type="match status" value="1"/>
</dbReference>
<dbReference type="PROSITE" id="PS00070">
    <property type="entry name" value="ALDEHYDE_DEHYDR_CYS"/>
    <property type="match status" value="1"/>
</dbReference>
<sequence length="607" mass="65927">MVRVKQKNLESYRSNGTYPPTWRNPTTSFAPDQHRVSIHSSLKSKTKRRRLYKEADDNTKLRSSSSTTTTTTTMLLRISGNNLRPLRPQFLALRSSWLSTSPEQSTQPQMPPRVPNLIGGSFVESQSSSFIDVINPATQEVVSKVPLTTNEEFKAAVSAAKQAFPLWRNTPITTRQRVMLKFQELIRKNMDKLAMNITTEQGKTLKDSHGDIFRGLEVVEHACGMATLQMGEYLPNVSNGVDTYSIREPLGVCAGICPFNFPAMIPLWMFPVAVTCGNTFILKPSEKDPGASVILAELAMEAGLPDGVLNIVHGTNDTVNAICDDEDIRAVSFVGSNTAGMHIYARAAAKGKRIQSNMGAKNHGLVLPDANIDATLNALLAAGFGAAGQRCMALSTVVFVGDAKSWEDKLVERAKALKVTCGSEPDADLGPVISKQAKERICRLIQSGVDDGAKLLLDGRDIVVPGYEKGNFIGPTILSGVTPDMECYKEEIFGPVLVCMQANSFDEAISIINKNKYGNGAAIFTSSGAAARKFQMDIEAGQIGINVPIPVPLPFFSFTGNKASFAGDLNFYGKAGVDFFTQIKTVTQQWKDIPTSVSLAMPTSQKQ</sequence>
<gene>
    <name type="primary">ALDH6B2</name>
    <name type="ordered locus">At2g14170</name>
    <name type="ORF">F15N24.6</name>
    <name type="ORF">T22C12.10</name>
</gene>
<comment type="catalytic activity">
    <reaction>
        <text>2-methyl-3-oxopropanoate + NAD(+) + CoA + H2O = propanoyl-CoA + hydrogencarbonate + NADH + H(+)</text>
        <dbReference type="Rhea" id="RHEA:20804"/>
        <dbReference type="ChEBI" id="CHEBI:15377"/>
        <dbReference type="ChEBI" id="CHEBI:15378"/>
        <dbReference type="ChEBI" id="CHEBI:17544"/>
        <dbReference type="ChEBI" id="CHEBI:57287"/>
        <dbReference type="ChEBI" id="CHEBI:57392"/>
        <dbReference type="ChEBI" id="CHEBI:57540"/>
        <dbReference type="ChEBI" id="CHEBI:57700"/>
        <dbReference type="ChEBI" id="CHEBI:57945"/>
        <dbReference type="EC" id="1.2.1.27"/>
    </reaction>
</comment>
<comment type="subcellular location">
    <subcellularLocation>
        <location evidence="7">Mitochondrion</location>
    </subcellularLocation>
</comment>
<comment type="alternative products">
    <event type="alternative splicing"/>
    <isoform>
        <id>Q0WM29-1</id>
        <name>1</name>
        <sequence type="displayed"/>
    </isoform>
    <text>A number of isoforms are produced. According to EST sequences.</text>
</comment>
<comment type="similarity">
    <text evidence="6">Belongs to the aldehyde dehydrogenase family.</text>
</comment>
<comment type="caution">
    <text evidence="6">In contrast to other members of the family, the conserved Glu residue in position 94 is replaced by an Arg. Its activity is therefore unsure.</text>
</comment>
<reference key="1">
    <citation type="journal article" date="1999" name="Nature">
        <title>Sequence and analysis of chromosome 2 of the plant Arabidopsis thaliana.</title>
        <authorList>
            <person name="Lin X."/>
            <person name="Kaul S."/>
            <person name="Rounsley S.D."/>
            <person name="Shea T.P."/>
            <person name="Benito M.-I."/>
            <person name="Town C.D."/>
            <person name="Fujii C.Y."/>
            <person name="Mason T.M."/>
            <person name="Bowman C.L."/>
            <person name="Barnstead M.E."/>
            <person name="Feldblyum T.V."/>
            <person name="Buell C.R."/>
            <person name="Ketchum K.A."/>
            <person name="Lee J.J."/>
            <person name="Ronning C.M."/>
            <person name="Koo H.L."/>
            <person name="Moffat K.S."/>
            <person name="Cronin L.A."/>
            <person name="Shen M."/>
            <person name="Pai G."/>
            <person name="Van Aken S."/>
            <person name="Umayam L."/>
            <person name="Tallon L.J."/>
            <person name="Gill J.E."/>
            <person name="Adams M.D."/>
            <person name="Carrera A.J."/>
            <person name="Creasy T.H."/>
            <person name="Goodman H.M."/>
            <person name="Somerville C.R."/>
            <person name="Copenhaver G.P."/>
            <person name="Preuss D."/>
            <person name="Nierman W.C."/>
            <person name="White O."/>
            <person name="Eisen J.A."/>
            <person name="Salzberg S.L."/>
            <person name="Fraser C.M."/>
            <person name="Venter J.C."/>
        </authorList>
    </citation>
    <scope>NUCLEOTIDE SEQUENCE [LARGE SCALE GENOMIC DNA]</scope>
    <source>
        <strain>cv. Columbia</strain>
    </source>
</reference>
<reference key="2">
    <citation type="journal article" date="2017" name="Plant J.">
        <title>Araport11: a complete reannotation of the Arabidopsis thaliana reference genome.</title>
        <authorList>
            <person name="Cheng C.Y."/>
            <person name="Krishnakumar V."/>
            <person name="Chan A.P."/>
            <person name="Thibaud-Nissen F."/>
            <person name="Schobel S."/>
            <person name="Town C.D."/>
        </authorList>
    </citation>
    <scope>GENOME REANNOTATION</scope>
    <source>
        <strain>cv. Columbia</strain>
    </source>
</reference>
<reference key="3">
    <citation type="submission" date="2006-07" db="EMBL/GenBank/DDBJ databases">
        <title>Large-scale analysis of RIKEN Arabidopsis full-length (RAFL) cDNAs.</title>
        <authorList>
            <person name="Totoki Y."/>
            <person name="Seki M."/>
            <person name="Ishida J."/>
            <person name="Nakajima M."/>
            <person name="Enju A."/>
            <person name="Kamiya A."/>
            <person name="Narusaka M."/>
            <person name="Shin-i T."/>
            <person name="Nakagawa M."/>
            <person name="Sakamoto N."/>
            <person name="Oishi K."/>
            <person name="Kohara Y."/>
            <person name="Kobayashi M."/>
            <person name="Toyoda A."/>
            <person name="Sakaki Y."/>
            <person name="Sakurai T."/>
            <person name="Iida K."/>
            <person name="Akiyama K."/>
            <person name="Satou M."/>
            <person name="Toyoda T."/>
            <person name="Konagaya A."/>
            <person name="Carninci P."/>
            <person name="Kawai J."/>
            <person name="Hayashizaki Y."/>
            <person name="Shinozaki K."/>
        </authorList>
    </citation>
    <scope>NUCLEOTIDE SEQUENCE [LARGE SCALE MRNA] OF 294-607</scope>
    <source>
        <strain>cv. Columbia</strain>
    </source>
</reference>
<reference key="4">
    <citation type="journal article" date="2004" name="Trends Plant Sci.">
        <title>The ALDH gene superfamily of Arabidopsis.</title>
        <authorList>
            <person name="Kirch H.-H."/>
            <person name="Bartels D."/>
            <person name="Wei Y."/>
            <person name="Schnable P.S."/>
            <person name="Wood A.J."/>
        </authorList>
    </citation>
    <scope>NOMENCLATURE</scope>
</reference>
<reference key="5">
    <citation type="journal article" date="2015" name="J. Exp. Bot.">
        <title>Identification of cleavage sites and substrate proteins for two mitochondrial intermediate peptidases in Arabidopsis thaliana.</title>
        <authorList>
            <person name="Carrie C."/>
            <person name="Venne A.S."/>
            <person name="Zahedi R.P."/>
            <person name="Soll J."/>
        </authorList>
    </citation>
    <scope>IDENTIFICATION BY MASS SPECTROMETRY</scope>
    <scope>CLEAVAGE OF TRANSIT PEPTIDE AFTER LEU-98</scope>
</reference>
<evidence type="ECO:0000250" key="1"/>
<evidence type="ECO:0000250" key="2">
    <source>
        <dbReference type="UniProtKB" id="P42412"/>
    </source>
</evidence>
<evidence type="ECO:0000255" key="3">
    <source>
        <dbReference type="PROSITE-ProRule" id="PRU10008"/>
    </source>
</evidence>
<evidence type="ECO:0000256" key="4">
    <source>
        <dbReference type="SAM" id="MobiDB-lite"/>
    </source>
</evidence>
<evidence type="ECO:0000269" key="5">
    <source>
    </source>
</evidence>
<evidence type="ECO:0000305" key="6"/>
<evidence type="ECO:0000305" key="7">
    <source>
    </source>
</evidence>
<feature type="transit peptide" description="Mitochondrion" evidence="5">
    <location>
        <begin position="1"/>
        <end position="98"/>
    </location>
</feature>
<feature type="chain" id="PRO_0000256067" description="Methylmalonate-semialdehyde dehydrogenase [acylating], mitochondrial">
    <location>
        <begin position="99"/>
        <end position="607"/>
    </location>
</feature>
<feature type="region of interest" description="Disordered" evidence="4">
    <location>
        <begin position="1"/>
        <end position="69"/>
    </location>
</feature>
<feature type="compositionally biased region" description="Polar residues" evidence="4">
    <location>
        <begin position="9"/>
        <end position="30"/>
    </location>
</feature>
<feature type="compositionally biased region" description="Basic residues" evidence="4">
    <location>
        <begin position="42"/>
        <end position="51"/>
    </location>
</feature>
<feature type="active site" description="Nucleophile" evidence="3">
    <location>
        <position position="391"/>
    </location>
</feature>
<feature type="binding site" evidence="2">
    <location>
        <position position="259"/>
    </location>
    <ligand>
        <name>NAD(+)</name>
        <dbReference type="ChEBI" id="CHEBI:57540"/>
    </ligand>
</feature>
<feature type="binding site" evidence="2">
    <location>
        <position position="283"/>
    </location>
    <ligand>
        <name>NAD(+)</name>
        <dbReference type="ChEBI" id="CHEBI:57540"/>
    </ligand>
</feature>
<feature type="binding site" evidence="2">
    <location>
        <position position="286"/>
    </location>
    <ligand>
        <name>NAD(+)</name>
        <dbReference type="ChEBI" id="CHEBI:57540"/>
    </ligand>
</feature>
<feature type="binding site" evidence="2">
    <location>
        <position position="287"/>
    </location>
    <ligand>
        <name>NAD(+)</name>
        <dbReference type="ChEBI" id="CHEBI:57540"/>
    </ligand>
</feature>
<feature type="binding site" evidence="2">
    <location>
        <position position="336"/>
    </location>
    <ligand>
        <name>NAD(+)</name>
        <dbReference type="ChEBI" id="CHEBI:57540"/>
    </ligand>
</feature>
<feature type="binding site" evidence="2">
    <location>
        <position position="491"/>
    </location>
    <ligand>
        <name>NAD(+)</name>
        <dbReference type="ChEBI" id="CHEBI:57540"/>
    </ligand>
</feature>
<feature type="site" description="Transition state stabilizer" evidence="1">
    <location>
        <position position="260"/>
    </location>
</feature>
<keyword id="KW-0025">Alternative splicing</keyword>
<keyword id="KW-0496">Mitochondrion</keyword>
<keyword id="KW-0520">NAD</keyword>
<keyword id="KW-0560">Oxidoreductase</keyword>
<keyword id="KW-1185">Reference proteome</keyword>
<keyword id="KW-0809">Transit peptide</keyword>
<protein>
    <recommendedName>
        <fullName>Methylmalonate-semialdehyde dehydrogenase [acylating], mitochondrial</fullName>
        <shortName>MM-ALDH</shortName>
        <shortName>MMSDH</shortName>
        <shortName>Malonate-semialdehyde dehydrogenase [acylating]</shortName>
        <ecNumber>1.2.1.27</ecNumber>
    </recommendedName>
    <alternativeName>
        <fullName>Aldehyde dehydrogenase family 6 member B2</fullName>
    </alternativeName>
</protein>
<name>MMSA_ARATH</name>
<organism>
    <name type="scientific">Arabidopsis thaliana</name>
    <name type="common">Mouse-ear cress</name>
    <dbReference type="NCBI Taxonomy" id="3702"/>
    <lineage>
        <taxon>Eukaryota</taxon>
        <taxon>Viridiplantae</taxon>
        <taxon>Streptophyta</taxon>
        <taxon>Embryophyta</taxon>
        <taxon>Tracheophyta</taxon>
        <taxon>Spermatophyta</taxon>
        <taxon>Magnoliopsida</taxon>
        <taxon>eudicotyledons</taxon>
        <taxon>Gunneridae</taxon>
        <taxon>Pentapetalae</taxon>
        <taxon>rosids</taxon>
        <taxon>malvids</taxon>
        <taxon>Brassicales</taxon>
        <taxon>Brassicaceae</taxon>
        <taxon>Camelineae</taxon>
        <taxon>Arabidopsis</taxon>
    </lineage>
</organism>
<accession>Q0WM29</accession>
<accession>Q9SI43</accession>
<proteinExistence type="evidence at protein level"/>